<protein>
    <recommendedName>
        <fullName evidence="1">ATP synthase subunit delta</fullName>
    </recommendedName>
    <alternativeName>
        <fullName evidence="1">ATP synthase F(1) sector subunit delta</fullName>
    </alternativeName>
    <alternativeName>
        <fullName evidence="1">F-type ATPase subunit delta</fullName>
        <shortName evidence="1">F-ATPase subunit delta</shortName>
    </alternativeName>
</protein>
<comment type="function">
    <text evidence="1">F(1)F(0) ATP synthase produces ATP from ADP in the presence of a proton or sodium gradient. F-type ATPases consist of two structural domains, F(1) containing the extramembraneous catalytic core and F(0) containing the membrane proton channel, linked together by a central stalk and a peripheral stalk. During catalysis, ATP synthesis in the catalytic domain of F(1) is coupled via a rotary mechanism of the central stalk subunits to proton translocation.</text>
</comment>
<comment type="function">
    <text evidence="1">This protein is part of the stalk that links CF(0) to CF(1). It either transmits conformational changes from CF(0) to CF(1) or is implicated in proton conduction.</text>
</comment>
<comment type="subunit">
    <text evidence="1">F-type ATPases have 2 components, F(1) - the catalytic core - and F(0) - the membrane proton channel. F(1) has five subunits: alpha(3), beta(3), gamma(1), delta(1), epsilon(1). F(0) has three main subunits: a(1), b(2) and c(10-14). The alpha and beta chains form an alternating ring which encloses part of the gamma chain. F(1) is attached to F(0) by a central stalk formed by the gamma and epsilon chains, while a peripheral stalk is formed by the delta and b chains.</text>
</comment>
<comment type="subcellular location">
    <subcellularLocation>
        <location evidence="1">Cell inner membrane</location>
        <topology evidence="1">Peripheral membrane protein</topology>
    </subcellularLocation>
</comment>
<comment type="similarity">
    <text evidence="1">Belongs to the ATPase delta chain family.</text>
</comment>
<feature type="chain" id="PRO_0000382080" description="ATP synthase subunit delta">
    <location>
        <begin position="1"/>
        <end position="184"/>
    </location>
</feature>
<reference key="1">
    <citation type="journal article" date="2010" name="J. Bacteriol.">
        <title>The genetic basis of laboratory adaptation in Caulobacter crescentus.</title>
        <authorList>
            <person name="Marks M.E."/>
            <person name="Castro-Rojas C.M."/>
            <person name="Teiling C."/>
            <person name="Du L."/>
            <person name="Kapatral V."/>
            <person name="Walunas T.L."/>
            <person name="Crosson S."/>
        </authorList>
    </citation>
    <scope>NUCLEOTIDE SEQUENCE [LARGE SCALE GENOMIC DNA]</scope>
    <source>
        <strain>NA1000 / CB15N</strain>
    </source>
</reference>
<name>ATPD_CAUVN</name>
<evidence type="ECO:0000255" key="1">
    <source>
        <dbReference type="HAMAP-Rule" id="MF_01416"/>
    </source>
</evidence>
<sequence>MADETKATDAGQRYAQSLFELTIENGSLQKVEADLKSLKAMVADSADLRRLIASPAFSAEDKGKGLTAVAKKAGFQPLTTKFLGLVAANGRTGDLLGAISAFVELSAKHRGVVTAEVVSAAALSPAQLKGVQTALAQALGKTPEVSTRVDPSLLGGLKVRVGSRLFDASLRSKLDSLKFALKRA</sequence>
<proteinExistence type="inferred from homology"/>
<gene>
    <name evidence="1" type="primary">atpH</name>
    <name type="ordered locus">CCNA_03563</name>
</gene>
<accession>B8H5I3</accession>
<keyword id="KW-0066">ATP synthesis</keyword>
<keyword id="KW-0997">Cell inner membrane</keyword>
<keyword id="KW-1003">Cell membrane</keyword>
<keyword id="KW-0139">CF(1)</keyword>
<keyword id="KW-0375">Hydrogen ion transport</keyword>
<keyword id="KW-0406">Ion transport</keyword>
<keyword id="KW-0472">Membrane</keyword>
<keyword id="KW-1185">Reference proteome</keyword>
<keyword id="KW-0813">Transport</keyword>
<organism>
    <name type="scientific">Caulobacter vibrioides (strain NA1000 / CB15N)</name>
    <name type="common">Caulobacter crescentus</name>
    <dbReference type="NCBI Taxonomy" id="565050"/>
    <lineage>
        <taxon>Bacteria</taxon>
        <taxon>Pseudomonadati</taxon>
        <taxon>Pseudomonadota</taxon>
        <taxon>Alphaproteobacteria</taxon>
        <taxon>Caulobacterales</taxon>
        <taxon>Caulobacteraceae</taxon>
        <taxon>Caulobacter</taxon>
    </lineage>
</organism>
<dbReference type="EMBL" id="CP001340">
    <property type="protein sequence ID" value="ACL97028.2"/>
    <property type="molecule type" value="Genomic_DNA"/>
</dbReference>
<dbReference type="RefSeq" id="WP_010921279.1">
    <property type="nucleotide sequence ID" value="NC_011916.1"/>
</dbReference>
<dbReference type="RefSeq" id="YP_002518936.2">
    <property type="nucleotide sequence ID" value="NC_011916.1"/>
</dbReference>
<dbReference type="SMR" id="B8H5I3"/>
<dbReference type="GeneID" id="7332561"/>
<dbReference type="KEGG" id="ccs:CCNA_03563"/>
<dbReference type="PATRIC" id="fig|565050.3.peg.3478"/>
<dbReference type="HOGENOM" id="CLU_085114_0_1_5"/>
<dbReference type="OrthoDB" id="9796185at2"/>
<dbReference type="PhylomeDB" id="B8H5I3"/>
<dbReference type="Proteomes" id="UP000001364">
    <property type="component" value="Chromosome"/>
</dbReference>
<dbReference type="GO" id="GO:0005886">
    <property type="term" value="C:plasma membrane"/>
    <property type="evidence" value="ECO:0007669"/>
    <property type="project" value="UniProtKB-SubCell"/>
</dbReference>
<dbReference type="GO" id="GO:0045259">
    <property type="term" value="C:proton-transporting ATP synthase complex"/>
    <property type="evidence" value="ECO:0007669"/>
    <property type="project" value="UniProtKB-KW"/>
</dbReference>
<dbReference type="GO" id="GO:0046933">
    <property type="term" value="F:proton-transporting ATP synthase activity, rotational mechanism"/>
    <property type="evidence" value="ECO:0007669"/>
    <property type="project" value="UniProtKB-UniRule"/>
</dbReference>
<dbReference type="Gene3D" id="1.10.520.20">
    <property type="entry name" value="N-terminal domain of the delta subunit of the F1F0-ATP synthase"/>
    <property type="match status" value="1"/>
</dbReference>
<dbReference type="HAMAP" id="MF_01416">
    <property type="entry name" value="ATP_synth_delta_bact"/>
    <property type="match status" value="1"/>
</dbReference>
<dbReference type="InterPro" id="IPR026015">
    <property type="entry name" value="ATP_synth_OSCP/delta_N_sf"/>
</dbReference>
<dbReference type="InterPro" id="IPR000711">
    <property type="entry name" value="ATPase_OSCP/dsu"/>
</dbReference>
<dbReference type="NCBIfam" id="TIGR01145">
    <property type="entry name" value="ATP_synt_delta"/>
    <property type="match status" value="1"/>
</dbReference>
<dbReference type="NCBIfam" id="NF004406">
    <property type="entry name" value="PRK05758.3-2"/>
    <property type="match status" value="1"/>
</dbReference>
<dbReference type="PANTHER" id="PTHR11910">
    <property type="entry name" value="ATP SYNTHASE DELTA CHAIN"/>
    <property type="match status" value="1"/>
</dbReference>
<dbReference type="Pfam" id="PF00213">
    <property type="entry name" value="OSCP"/>
    <property type="match status" value="1"/>
</dbReference>
<dbReference type="PRINTS" id="PR00125">
    <property type="entry name" value="ATPASEDELTA"/>
</dbReference>
<dbReference type="SUPFAM" id="SSF47928">
    <property type="entry name" value="N-terminal domain of the delta subunit of the F1F0-ATP synthase"/>
    <property type="match status" value="1"/>
</dbReference>